<feature type="chain" id="PRO_0000329428" description="Calcium-binding mitochondrial carrier protein">
    <location>
        <begin position="1"/>
        <end position="772"/>
    </location>
</feature>
<feature type="transmembrane region" description="Helical; Name=1" evidence="1">
    <location>
        <begin position="442"/>
        <end position="459"/>
    </location>
</feature>
<feature type="transmembrane region" description="Helical; Name=2" evidence="1">
    <location>
        <begin position="501"/>
        <end position="520"/>
    </location>
</feature>
<feature type="transmembrane region" description="Helical; Name=3" evidence="1">
    <location>
        <begin position="545"/>
        <end position="558"/>
    </location>
</feature>
<feature type="transmembrane region" description="Helical; Name=4" evidence="1">
    <location>
        <begin position="591"/>
        <end position="610"/>
    </location>
</feature>
<feature type="transmembrane region" description="Helical; Name=5" evidence="1">
    <location>
        <begin position="630"/>
        <end position="647"/>
    </location>
</feature>
<feature type="transmembrane region" description="Helical; Name=6" evidence="1">
    <location>
        <begin position="687"/>
        <end position="706"/>
    </location>
</feature>
<feature type="domain" description="EF-hand 1" evidence="3">
    <location>
        <begin position="132"/>
        <end position="165"/>
    </location>
</feature>
<feature type="domain" description="EF-hand 2" evidence="3">
    <location>
        <begin position="166"/>
        <end position="201"/>
    </location>
</feature>
<feature type="domain" description="EF-hand 3" evidence="3">
    <location>
        <begin position="235"/>
        <end position="270"/>
    </location>
</feature>
<feature type="domain" description="EF-hand 4" evidence="3">
    <location>
        <begin position="347"/>
        <end position="382"/>
    </location>
</feature>
<feature type="repeat" description="Solcar 1" evidence="2">
    <location>
        <begin position="436"/>
        <end position="526"/>
    </location>
</feature>
<feature type="repeat" description="Solcar 2" evidence="2">
    <location>
        <begin position="535"/>
        <end position="616"/>
    </location>
</feature>
<feature type="repeat" description="Solcar 3" evidence="2">
    <location>
        <begin position="624"/>
        <end position="712"/>
    </location>
</feature>
<feature type="region of interest" description="N-terminal domain" evidence="1">
    <location>
        <begin position="1"/>
        <end position="377"/>
    </location>
</feature>
<feature type="region of interest" description="Linker loop domain" evidence="1">
    <location>
        <begin position="378"/>
        <end position="422"/>
    </location>
</feature>
<feature type="region of interest" description="Carrier domain" evidence="1">
    <location>
        <begin position="432"/>
        <end position="720"/>
    </location>
</feature>
<feature type="region of interest" description="C-terminal domain" evidence="1">
    <location>
        <begin position="721"/>
        <end position="772"/>
    </location>
</feature>
<feature type="region of interest" description="Disordered" evidence="4">
    <location>
        <begin position="751"/>
        <end position="772"/>
    </location>
</feature>
<feature type="compositionally biased region" description="Low complexity" evidence="4">
    <location>
        <begin position="763"/>
        <end position="772"/>
    </location>
</feature>
<feature type="binding site" evidence="3">
    <location>
        <position position="145"/>
    </location>
    <ligand>
        <name>Ca(2+)</name>
        <dbReference type="ChEBI" id="CHEBI:29108"/>
        <label>1</label>
    </ligand>
</feature>
<feature type="binding site" evidence="3">
    <location>
        <position position="147"/>
    </location>
    <ligand>
        <name>Ca(2+)</name>
        <dbReference type="ChEBI" id="CHEBI:29108"/>
        <label>1</label>
    </ligand>
</feature>
<feature type="binding site" evidence="3">
    <location>
        <position position="149"/>
    </location>
    <ligand>
        <name>Ca(2+)</name>
        <dbReference type="ChEBI" id="CHEBI:29108"/>
        <label>1</label>
    </ligand>
</feature>
<feature type="binding site" evidence="3">
    <location>
        <position position="151"/>
    </location>
    <ligand>
        <name>Ca(2+)</name>
        <dbReference type="ChEBI" id="CHEBI:29108"/>
        <label>1</label>
    </ligand>
</feature>
<feature type="binding site" evidence="3">
    <location>
        <position position="156"/>
    </location>
    <ligand>
        <name>Ca(2+)</name>
        <dbReference type="ChEBI" id="CHEBI:29108"/>
        <label>1</label>
    </ligand>
</feature>
<feature type="binding site" evidence="3">
    <location>
        <position position="179"/>
    </location>
    <ligand>
        <name>Ca(2+)</name>
        <dbReference type="ChEBI" id="CHEBI:29108"/>
        <label>2</label>
    </ligand>
</feature>
<feature type="binding site" evidence="3">
    <location>
        <position position="181"/>
    </location>
    <ligand>
        <name>Ca(2+)</name>
        <dbReference type="ChEBI" id="CHEBI:29108"/>
        <label>2</label>
    </ligand>
</feature>
<feature type="binding site" evidence="3">
    <location>
        <position position="183"/>
    </location>
    <ligand>
        <name>Ca(2+)</name>
        <dbReference type="ChEBI" id="CHEBI:29108"/>
        <label>2</label>
    </ligand>
</feature>
<feature type="binding site" evidence="3">
    <location>
        <position position="185"/>
    </location>
    <ligand>
        <name>Ca(2+)</name>
        <dbReference type="ChEBI" id="CHEBI:29108"/>
        <label>2</label>
    </ligand>
</feature>
<feature type="binding site" evidence="3">
    <location>
        <position position="190"/>
    </location>
    <ligand>
        <name>Ca(2+)</name>
        <dbReference type="ChEBI" id="CHEBI:29108"/>
        <label>2</label>
    </ligand>
</feature>
<feature type="binding site" evidence="3">
    <location>
        <position position="360"/>
    </location>
    <ligand>
        <name>Ca(2+)</name>
        <dbReference type="ChEBI" id="CHEBI:29108"/>
        <label>3</label>
    </ligand>
</feature>
<feature type="binding site" evidence="3">
    <location>
        <position position="362"/>
    </location>
    <ligand>
        <name>Ca(2+)</name>
        <dbReference type="ChEBI" id="CHEBI:29108"/>
        <label>3</label>
    </ligand>
</feature>
<feature type="binding site" evidence="3">
    <location>
        <position position="364"/>
    </location>
    <ligand>
        <name>Ca(2+)</name>
        <dbReference type="ChEBI" id="CHEBI:29108"/>
        <label>3</label>
    </ligand>
</feature>
<feature type="binding site" evidence="3">
    <location>
        <position position="366"/>
    </location>
    <ligand>
        <name>Ca(2+)</name>
        <dbReference type="ChEBI" id="CHEBI:29108"/>
        <label>3</label>
    </ligand>
</feature>
<feature type="binding site" evidence="3">
    <location>
        <position position="371"/>
    </location>
    <ligand>
        <name>Ca(2+)</name>
        <dbReference type="ChEBI" id="CHEBI:29108"/>
        <label>3</label>
    </ligand>
</feature>
<protein>
    <recommendedName>
        <fullName>Calcium-binding mitochondrial carrier protein</fullName>
    </recommendedName>
    <alternativeName>
        <fullName>Mitochondrial substrate carrier family protein O</fullName>
    </alternativeName>
</protein>
<dbReference type="EMBL" id="AAFI02000052">
    <property type="protein sequence ID" value="EAL65805.1"/>
    <property type="molecule type" value="Genomic_DNA"/>
</dbReference>
<dbReference type="RefSeq" id="XP_639128.1">
    <property type="nucleotide sequence ID" value="XM_634036.1"/>
</dbReference>
<dbReference type="SMR" id="Q54RB9"/>
<dbReference type="FunCoup" id="Q54RB9">
    <property type="interactions" value="383"/>
</dbReference>
<dbReference type="PaxDb" id="44689-DDB0234089"/>
<dbReference type="EnsemblProtists" id="EAL65805">
    <property type="protein sequence ID" value="EAL65805"/>
    <property type="gene ID" value="DDB_G0283329"/>
</dbReference>
<dbReference type="GeneID" id="8623999"/>
<dbReference type="KEGG" id="ddi:DDB_G0283329"/>
<dbReference type="dictyBase" id="DDB_G0283329">
    <property type="gene designation" value="mcfO"/>
</dbReference>
<dbReference type="VEuPathDB" id="AmoebaDB:DDB_G0283329"/>
<dbReference type="eggNOG" id="KOG0751">
    <property type="taxonomic scope" value="Eukaryota"/>
</dbReference>
<dbReference type="HOGENOM" id="CLU_014931_3_0_1"/>
<dbReference type="InParanoid" id="Q54RB9"/>
<dbReference type="OMA" id="AFQNVMR"/>
<dbReference type="PhylomeDB" id="Q54RB9"/>
<dbReference type="Reactome" id="R-DDI-428643">
    <property type="pathway name" value="Organic anion transporters"/>
</dbReference>
<dbReference type="Reactome" id="R-DDI-8963693">
    <property type="pathway name" value="Aspartate and asparagine metabolism"/>
</dbReference>
<dbReference type="Reactome" id="R-DDI-9856872">
    <property type="pathway name" value="Malate-aspartate shuttle"/>
</dbReference>
<dbReference type="PRO" id="PR:Q54RB9"/>
<dbReference type="Proteomes" id="UP000002195">
    <property type="component" value="Chromosome 4"/>
</dbReference>
<dbReference type="GO" id="GO:0005743">
    <property type="term" value="C:mitochondrial inner membrane"/>
    <property type="evidence" value="ECO:0007669"/>
    <property type="project" value="UniProtKB-SubCell"/>
</dbReference>
<dbReference type="GO" id="GO:0005739">
    <property type="term" value="C:mitochondrion"/>
    <property type="evidence" value="ECO:0000250"/>
    <property type="project" value="dictyBase"/>
</dbReference>
<dbReference type="GO" id="GO:0005509">
    <property type="term" value="F:calcium ion binding"/>
    <property type="evidence" value="ECO:0000250"/>
    <property type="project" value="UniProtKB"/>
</dbReference>
<dbReference type="GO" id="GO:0042802">
    <property type="term" value="F:identical protein binding"/>
    <property type="evidence" value="ECO:0000250"/>
    <property type="project" value="UniProtKB"/>
</dbReference>
<dbReference type="GO" id="GO:0015183">
    <property type="term" value="F:L-aspartate transmembrane transporter activity"/>
    <property type="evidence" value="ECO:0000318"/>
    <property type="project" value="GO_Central"/>
</dbReference>
<dbReference type="GO" id="GO:0005313">
    <property type="term" value="F:L-glutamate transmembrane transporter activity"/>
    <property type="evidence" value="ECO:0000318"/>
    <property type="project" value="GO_Central"/>
</dbReference>
<dbReference type="GO" id="GO:0015810">
    <property type="term" value="P:aspartate transmembrane transport"/>
    <property type="evidence" value="ECO:0000250"/>
    <property type="project" value="dictyBase"/>
</dbReference>
<dbReference type="GO" id="GO:0015813">
    <property type="term" value="P:L-glutamate transmembrane transport"/>
    <property type="evidence" value="ECO:0000318"/>
    <property type="project" value="GO_Central"/>
</dbReference>
<dbReference type="GO" id="GO:0043490">
    <property type="term" value="P:malate-aspartate shuttle"/>
    <property type="evidence" value="ECO:0000318"/>
    <property type="project" value="GO_Central"/>
</dbReference>
<dbReference type="CDD" id="cd00051">
    <property type="entry name" value="EFh"/>
    <property type="match status" value="1"/>
</dbReference>
<dbReference type="FunFam" id="1.10.238.10:FF:000981">
    <property type="entry name" value="Calcium-binding mitochondrial carrier protein"/>
    <property type="match status" value="1"/>
</dbReference>
<dbReference type="FunFam" id="1.50.40.10:FF:000004">
    <property type="entry name" value="Calcium-binding mitochondrial carrier protein Aralar1"/>
    <property type="match status" value="1"/>
</dbReference>
<dbReference type="Gene3D" id="1.10.238.10">
    <property type="entry name" value="EF-hand"/>
    <property type="match status" value="2"/>
</dbReference>
<dbReference type="Gene3D" id="1.50.40.10">
    <property type="entry name" value="Mitochondrial carrier domain"/>
    <property type="match status" value="1"/>
</dbReference>
<dbReference type="InterPro" id="IPR011992">
    <property type="entry name" value="EF-hand-dom_pair"/>
</dbReference>
<dbReference type="InterPro" id="IPR018247">
    <property type="entry name" value="EF_Hand_1_Ca_BS"/>
</dbReference>
<dbReference type="InterPro" id="IPR002048">
    <property type="entry name" value="EF_hand_dom"/>
</dbReference>
<dbReference type="InterPro" id="IPR002067">
    <property type="entry name" value="Mit_carrier"/>
</dbReference>
<dbReference type="InterPro" id="IPR051028">
    <property type="entry name" value="Mito_Solute_Carrier"/>
</dbReference>
<dbReference type="InterPro" id="IPR018108">
    <property type="entry name" value="Mitochondrial_sb/sol_carrier"/>
</dbReference>
<dbReference type="InterPro" id="IPR023395">
    <property type="entry name" value="Mt_carrier_dom_sf"/>
</dbReference>
<dbReference type="PANTHER" id="PTHR45678:SF9">
    <property type="entry name" value="CALCIUM-BINDING MITOCHONDRIAL CARRIER PROTEIN ARALAR1"/>
    <property type="match status" value="1"/>
</dbReference>
<dbReference type="PANTHER" id="PTHR45678">
    <property type="entry name" value="MITOCHONDRIAL 2-OXODICARBOXYLATE CARRIER 1-RELATED"/>
    <property type="match status" value="1"/>
</dbReference>
<dbReference type="Pfam" id="PF13405">
    <property type="entry name" value="EF-hand_6"/>
    <property type="match status" value="1"/>
</dbReference>
<dbReference type="Pfam" id="PF13499">
    <property type="entry name" value="EF-hand_7"/>
    <property type="match status" value="1"/>
</dbReference>
<dbReference type="Pfam" id="PF13833">
    <property type="entry name" value="EF-hand_8"/>
    <property type="match status" value="1"/>
</dbReference>
<dbReference type="Pfam" id="PF00153">
    <property type="entry name" value="Mito_carr"/>
    <property type="match status" value="3"/>
</dbReference>
<dbReference type="PRINTS" id="PR00926">
    <property type="entry name" value="MITOCARRIER"/>
</dbReference>
<dbReference type="SMART" id="SM00054">
    <property type="entry name" value="EFh"/>
    <property type="match status" value="4"/>
</dbReference>
<dbReference type="SUPFAM" id="SSF47473">
    <property type="entry name" value="EF-hand"/>
    <property type="match status" value="2"/>
</dbReference>
<dbReference type="SUPFAM" id="SSF103506">
    <property type="entry name" value="Mitochondrial carrier"/>
    <property type="match status" value="1"/>
</dbReference>
<dbReference type="PROSITE" id="PS00018">
    <property type="entry name" value="EF_HAND_1"/>
    <property type="match status" value="3"/>
</dbReference>
<dbReference type="PROSITE" id="PS50222">
    <property type="entry name" value="EF_HAND_2"/>
    <property type="match status" value="4"/>
</dbReference>
<dbReference type="PROSITE" id="PS50920">
    <property type="entry name" value="SOLCAR"/>
    <property type="match status" value="3"/>
</dbReference>
<gene>
    <name type="primary">mcfO</name>
    <name type="ORF">DDB_G0283329</name>
</gene>
<proteinExistence type="inferred from homology"/>
<accession>Q54RB9</accession>
<keyword id="KW-0106">Calcium</keyword>
<keyword id="KW-0472">Membrane</keyword>
<keyword id="KW-0479">Metal-binding</keyword>
<keyword id="KW-0496">Mitochondrion</keyword>
<keyword id="KW-0999">Mitochondrion inner membrane</keyword>
<keyword id="KW-1185">Reference proteome</keyword>
<keyword id="KW-0677">Repeat</keyword>
<keyword id="KW-0812">Transmembrane</keyword>
<keyword id="KW-1133">Transmembrane helix</keyword>
<keyword id="KW-0813">Transport</keyword>
<reference key="1">
    <citation type="journal article" date="2005" name="Nature">
        <title>The genome of the social amoeba Dictyostelium discoideum.</title>
        <authorList>
            <person name="Eichinger L."/>
            <person name="Pachebat J.A."/>
            <person name="Gloeckner G."/>
            <person name="Rajandream M.A."/>
            <person name="Sucgang R."/>
            <person name="Berriman M."/>
            <person name="Song J."/>
            <person name="Olsen R."/>
            <person name="Szafranski K."/>
            <person name="Xu Q."/>
            <person name="Tunggal B."/>
            <person name="Kummerfeld S."/>
            <person name="Madera M."/>
            <person name="Konfortov B.A."/>
            <person name="Rivero F."/>
            <person name="Bankier A.T."/>
            <person name="Lehmann R."/>
            <person name="Hamlin N."/>
            <person name="Davies R."/>
            <person name="Gaudet P."/>
            <person name="Fey P."/>
            <person name="Pilcher K."/>
            <person name="Chen G."/>
            <person name="Saunders D."/>
            <person name="Sodergren E.J."/>
            <person name="Davis P."/>
            <person name="Kerhornou A."/>
            <person name="Nie X."/>
            <person name="Hall N."/>
            <person name="Anjard C."/>
            <person name="Hemphill L."/>
            <person name="Bason N."/>
            <person name="Farbrother P."/>
            <person name="Desany B."/>
            <person name="Just E."/>
            <person name="Morio T."/>
            <person name="Rost R."/>
            <person name="Churcher C.M."/>
            <person name="Cooper J."/>
            <person name="Haydock S."/>
            <person name="van Driessche N."/>
            <person name="Cronin A."/>
            <person name="Goodhead I."/>
            <person name="Muzny D.M."/>
            <person name="Mourier T."/>
            <person name="Pain A."/>
            <person name="Lu M."/>
            <person name="Harper D."/>
            <person name="Lindsay R."/>
            <person name="Hauser H."/>
            <person name="James K.D."/>
            <person name="Quiles M."/>
            <person name="Madan Babu M."/>
            <person name="Saito T."/>
            <person name="Buchrieser C."/>
            <person name="Wardroper A."/>
            <person name="Felder M."/>
            <person name="Thangavelu M."/>
            <person name="Johnson D."/>
            <person name="Knights A."/>
            <person name="Loulseged H."/>
            <person name="Mungall K.L."/>
            <person name="Oliver K."/>
            <person name="Price C."/>
            <person name="Quail M.A."/>
            <person name="Urushihara H."/>
            <person name="Hernandez J."/>
            <person name="Rabbinowitsch E."/>
            <person name="Steffen D."/>
            <person name="Sanders M."/>
            <person name="Ma J."/>
            <person name="Kohara Y."/>
            <person name="Sharp S."/>
            <person name="Simmonds M.N."/>
            <person name="Spiegler S."/>
            <person name="Tivey A."/>
            <person name="Sugano S."/>
            <person name="White B."/>
            <person name="Walker D."/>
            <person name="Woodward J.R."/>
            <person name="Winckler T."/>
            <person name="Tanaka Y."/>
            <person name="Shaulsky G."/>
            <person name="Schleicher M."/>
            <person name="Weinstock G.M."/>
            <person name="Rosenthal A."/>
            <person name="Cox E.C."/>
            <person name="Chisholm R.L."/>
            <person name="Gibbs R.A."/>
            <person name="Loomis W.F."/>
            <person name="Platzer M."/>
            <person name="Kay R.R."/>
            <person name="Williams J.G."/>
            <person name="Dear P.H."/>
            <person name="Noegel A.A."/>
            <person name="Barrell B.G."/>
            <person name="Kuspa A."/>
        </authorList>
    </citation>
    <scope>NUCLEOTIDE SEQUENCE [LARGE SCALE GENOMIC DNA]</scope>
    <source>
        <strain>AX4</strain>
    </source>
</reference>
<organism>
    <name type="scientific">Dictyostelium discoideum</name>
    <name type="common">Social amoeba</name>
    <dbReference type="NCBI Taxonomy" id="44689"/>
    <lineage>
        <taxon>Eukaryota</taxon>
        <taxon>Amoebozoa</taxon>
        <taxon>Evosea</taxon>
        <taxon>Eumycetozoa</taxon>
        <taxon>Dictyostelia</taxon>
        <taxon>Dictyosteliales</taxon>
        <taxon>Dictyosteliaceae</taxon>
        <taxon>Dictyostelium</taxon>
    </lineage>
</organism>
<comment type="function">
    <text evidence="1">Mitochondrial and calcium-binding carrier that catalyzes the calcium-dependent exchange of cytoplasmic glutamate with mitochondrial aspartate across the mitochondrial inner membrane.</text>
</comment>
<comment type="subunit">
    <text evidence="1">Homodimer (via N-terminus).</text>
</comment>
<comment type="subcellular location">
    <subcellularLocation>
        <location evidence="1">Mitochondrion inner membrane</location>
        <topology evidence="1">Multi-pass membrane protein</topology>
    </subcellularLocation>
</comment>
<comment type="domain">
    <text evidence="1">Upon calcium binding, the EF-hand-containing regulatory N-terminal domain binds to the C-terminal domain, opening a vestibule which allows the substrates to be translocated through the carrier domain. In the absence of calcium, the linker loop domain may close the vestibule, which may prevent substrates from entering the carrier domain.</text>
</comment>
<comment type="miscellaneous">
    <text evidence="1">Binds to one calcium ion with high affinity.</text>
</comment>
<comment type="similarity">
    <text evidence="5">Belongs to the mitochondrial carrier (TC 2.A.29) family.</text>
</comment>
<sequence>MFANRVRQAQKLYQKRFFSLGNNSTISKQQFKNSSNNNNNKNGGNKNGFYQKAFIATTVALTTTLLTATTLLDDNTNSEKEILKSQRQTFEKYASTTLEGERQMTAEDFLSALTTLESDKQSGEHEILKASLDADKFKVLFQMADVDHTGYISFDEYVMFDELMAKPEAEYFLAFKLFDRDGNGYISKNDFKHVITASLDPSIPFNFDCELVNLYFGDGRTELNYSQFTQLLKDLQQERIKQEFKFHDKYNSGYIPRDKFAKVLGSVKLRKIPDHVRDKLESISELNLLSGHPNEVSYSQFVAANDMLLHIPSYGRVLKAAILKNKKDNINKEEFLTEARSSTSIEITPLEIDLIFHLFDLNKDGKLSISDFEKSTGLNINKIGGGTNYSDSYPSDSHVTIQNSSTTPSPSTPITNTAAAIALNKKHGKTFAQQVLESIENFALGSIAGGIGAAAVYPIDLVKTRMQNQRAVDPAKRLYVNSWDCFKKVVKFEGVRGLYKGILPQMVGVAPEKAIKLTVNDLLRDLFGDKSKGEIYFPLEVLAGGFAGMSQVCVTNPLEIVKIRLQVQSTGPKVSAITIIKELGLAGLYKGAGACLLRDIPFSAIYFPTYAKMKTILANEDGKLGPMDLLLAGAVAGIPAASLVTPADVIKTRLQVKANAGEQTYTGIRDCFQKILKEEGPRALFKGALARVFRSSPQFGVTLVSYELLQKALLPDAEYKPPTNAPITQKDFDVIRGNTNTVQRVIDMESKFGTLHQTRDNNKSSNGGENKN</sequence>
<name>CMC_DICDI</name>
<evidence type="ECO:0000250" key="1">
    <source>
        <dbReference type="UniProtKB" id="O75746"/>
    </source>
</evidence>
<evidence type="ECO:0000255" key="2">
    <source>
        <dbReference type="PROSITE-ProRule" id="PRU00282"/>
    </source>
</evidence>
<evidence type="ECO:0000255" key="3">
    <source>
        <dbReference type="PROSITE-ProRule" id="PRU00448"/>
    </source>
</evidence>
<evidence type="ECO:0000256" key="4">
    <source>
        <dbReference type="SAM" id="MobiDB-lite"/>
    </source>
</evidence>
<evidence type="ECO:0000305" key="5"/>